<reference key="1">
    <citation type="journal article" date="1997" name="DNA Res.">
        <title>Structural analysis of Arabidopsis thaliana chromosome 5. II. Sequence features of the regions of 1,044,062 bp covered by thirteen physically assigned P1 clones.</title>
        <authorList>
            <person name="Kotani H."/>
            <person name="Nakamura Y."/>
            <person name="Sato S."/>
            <person name="Kaneko T."/>
            <person name="Asamizu E."/>
            <person name="Miyajima N."/>
            <person name="Tabata S."/>
        </authorList>
    </citation>
    <scope>NUCLEOTIDE SEQUENCE [LARGE SCALE GENOMIC DNA]</scope>
    <source>
        <strain>cv. Columbia</strain>
    </source>
</reference>
<reference key="2">
    <citation type="journal article" date="2017" name="Plant J.">
        <title>Araport11: a complete reannotation of the Arabidopsis thaliana reference genome.</title>
        <authorList>
            <person name="Cheng C.Y."/>
            <person name="Krishnakumar V."/>
            <person name="Chan A.P."/>
            <person name="Thibaud-Nissen F."/>
            <person name="Schobel S."/>
            <person name="Town C.D."/>
        </authorList>
    </citation>
    <scope>GENOME REANNOTATION</scope>
    <source>
        <strain>cv. Columbia</strain>
    </source>
</reference>
<reference key="3">
    <citation type="journal article" date="2006" name="Plant Biotechnol. J.">
        <title>Simultaneous high-throughput recombinational cloning of open reading frames in closed and open configurations.</title>
        <authorList>
            <person name="Underwood B.A."/>
            <person name="Vanderhaeghen R."/>
            <person name="Whitford R."/>
            <person name="Town C.D."/>
            <person name="Hilson P."/>
        </authorList>
    </citation>
    <scope>NUCLEOTIDE SEQUENCE [LARGE SCALE MRNA]</scope>
    <source>
        <strain>cv. Columbia</strain>
    </source>
</reference>
<reference key="4">
    <citation type="journal article" date="2021" name="J. Integr. Plant Biol.">
        <title>A histone H3K27me3 reader cooperates with a family of PHD finger-containing proteins to regulate flowering time in Arabidopsis.</title>
        <authorList>
            <person name="Qian F."/>
            <person name="Zhao Q.-Y."/>
            <person name="Zhang T.-N."/>
            <person name="Li Y.-L."/>
            <person name="Su Y.-N."/>
            <person name="Li L."/>
            <person name="Sui J.-H."/>
            <person name="Chen S."/>
            <person name="He X.-J."/>
        </authorList>
    </citation>
    <scope>FUNCTION</scope>
    <scope>DISRUPTION PHENOTYPE</scope>
    <scope>INTERACTION WITH AIPP3/BDT1</scope>
    <source>
        <strain>cv. Columbia</strain>
    </source>
</reference>
<sequence length="161" mass="17249">MADESGYDAGSDAGSDASLPSSEISFVEVKKPCEVCGSNANDHAIMTCFLCRDTREHIYCARVHLRSVPRMWICEECRMNPVVVNNVAPVDQEAAASSSRITYQVADSEVVNQTMTSSDSGNQISATHQQPPQAHASPVAVPMDTSSSDNQQPPSDSESAI</sequence>
<feature type="chain" id="PRO_0000458548" description="PHD finger-containing protein 4">
    <location>
        <begin position="1"/>
        <end position="161"/>
    </location>
</feature>
<feature type="zinc finger region" description="PHD-type" evidence="1">
    <location>
        <begin position="30"/>
        <end position="80"/>
    </location>
</feature>
<feature type="region of interest" description="Disordered" evidence="2">
    <location>
        <begin position="114"/>
        <end position="161"/>
    </location>
</feature>
<feature type="compositionally biased region" description="Polar residues" evidence="2">
    <location>
        <begin position="114"/>
        <end position="132"/>
    </location>
</feature>
<feature type="compositionally biased region" description="Low complexity" evidence="2">
    <location>
        <begin position="146"/>
        <end position="161"/>
    </location>
</feature>
<feature type="binding site" evidence="1">
    <location>
        <position position="33"/>
    </location>
    <ligand>
        <name>Zn(2+)</name>
        <dbReference type="ChEBI" id="CHEBI:29105"/>
        <label>1</label>
    </ligand>
</feature>
<feature type="binding site" evidence="1">
    <location>
        <position position="36"/>
    </location>
    <ligand>
        <name>Zn(2+)</name>
        <dbReference type="ChEBI" id="CHEBI:29105"/>
        <label>1</label>
    </ligand>
</feature>
<feature type="binding site" evidence="1">
    <location>
        <position position="48"/>
    </location>
    <ligand>
        <name>Zn(2+)</name>
        <dbReference type="ChEBI" id="CHEBI:29105"/>
        <label>2</label>
    </ligand>
</feature>
<feature type="binding site" evidence="1">
    <location>
        <position position="51"/>
    </location>
    <ligand>
        <name>Zn(2+)</name>
        <dbReference type="ChEBI" id="CHEBI:29105"/>
        <label>2</label>
    </ligand>
</feature>
<feature type="binding site" evidence="1">
    <location>
        <position position="57"/>
    </location>
    <ligand>
        <name>Zn(2+)</name>
        <dbReference type="ChEBI" id="CHEBI:29105"/>
        <label>1</label>
    </ligand>
</feature>
<feature type="binding site" evidence="1">
    <location>
        <position position="60"/>
    </location>
    <ligand>
        <name>Zn(2+)</name>
        <dbReference type="ChEBI" id="CHEBI:29105"/>
        <label>1</label>
    </ligand>
</feature>
<feature type="binding site" evidence="1">
    <location>
        <position position="74"/>
    </location>
    <ligand>
        <name>Zn(2+)</name>
        <dbReference type="ChEBI" id="CHEBI:29105"/>
        <label>2</label>
    </ligand>
</feature>
<feature type="binding site" evidence="1">
    <location>
        <position position="77"/>
    </location>
    <ligand>
        <name>Zn(2+)</name>
        <dbReference type="ChEBI" id="CHEBI:29105"/>
        <label>2</label>
    </ligand>
</feature>
<dbReference type="EMBL" id="AB006696">
    <property type="protein sequence ID" value="BAB10373.1"/>
    <property type="molecule type" value="Genomic_DNA"/>
</dbReference>
<dbReference type="EMBL" id="CP002688">
    <property type="protein sequence ID" value="AED97422.1"/>
    <property type="molecule type" value="Genomic_DNA"/>
</dbReference>
<dbReference type="EMBL" id="DQ447099">
    <property type="protein sequence ID" value="ABE66267.1"/>
    <property type="molecule type" value="mRNA"/>
</dbReference>
<dbReference type="EMBL" id="DQ653386">
    <property type="protein sequence ID" value="ABK28770.1"/>
    <property type="status" value="ALT_SEQ"/>
    <property type="molecule type" value="mRNA"/>
</dbReference>
<dbReference type="RefSeq" id="NP_200919.2">
    <property type="nucleotide sequence ID" value="NM_125504.3"/>
</dbReference>
<dbReference type="PaxDb" id="3702-AT5G61110.1"/>
<dbReference type="EnsemblPlants" id="AT5G61110.1">
    <property type="protein sequence ID" value="AT5G61110.1"/>
    <property type="gene ID" value="AT5G61110"/>
</dbReference>
<dbReference type="GeneID" id="836232"/>
<dbReference type="Gramene" id="AT5G61110.1">
    <property type="protein sequence ID" value="AT5G61110.1"/>
    <property type="gene ID" value="AT5G61110"/>
</dbReference>
<dbReference type="KEGG" id="ath:AT5G61110"/>
<dbReference type="Araport" id="AT5G61110"/>
<dbReference type="TAIR" id="AT5G61110"/>
<dbReference type="HOGENOM" id="CLU_1646044_0_0_1"/>
<dbReference type="OMA" id="MWWLCEV"/>
<dbReference type="PRO" id="PR:Q9FNQ4"/>
<dbReference type="Proteomes" id="UP000006548">
    <property type="component" value="Chromosome 5"/>
</dbReference>
<dbReference type="ExpressionAtlas" id="Q9FNQ4">
    <property type="expression patterns" value="baseline and differential"/>
</dbReference>
<dbReference type="GO" id="GO:0008270">
    <property type="term" value="F:zinc ion binding"/>
    <property type="evidence" value="ECO:0007669"/>
    <property type="project" value="UniProtKB-KW"/>
</dbReference>
<dbReference type="Gene3D" id="3.30.40.10">
    <property type="entry name" value="Zinc/RING finger domain, C3HC4 (zinc finger)"/>
    <property type="match status" value="1"/>
</dbReference>
<dbReference type="InterPro" id="IPR011011">
    <property type="entry name" value="Znf_FYVE_PHD"/>
</dbReference>
<dbReference type="InterPro" id="IPR013083">
    <property type="entry name" value="Znf_RING/FYVE/PHD"/>
</dbReference>
<dbReference type="SUPFAM" id="SSF57903">
    <property type="entry name" value="FYVE/PHD zinc finger"/>
    <property type="match status" value="1"/>
</dbReference>
<name>PHD4_ARATH</name>
<evidence type="ECO:0000255" key="1">
    <source>
        <dbReference type="PROSITE-ProRule" id="PRU00146"/>
    </source>
</evidence>
<evidence type="ECO:0000256" key="2">
    <source>
        <dbReference type="SAM" id="MobiDB-lite"/>
    </source>
</evidence>
<evidence type="ECO:0000269" key="3">
    <source>
    </source>
</evidence>
<evidence type="ECO:0000303" key="4">
    <source>
    </source>
</evidence>
<evidence type="ECO:0000305" key="5"/>
<evidence type="ECO:0000312" key="6">
    <source>
        <dbReference type="EMBL" id="ABE66267.1"/>
    </source>
</evidence>
<evidence type="ECO:0000312" key="7">
    <source>
        <dbReference type="EMBL" id="BAB10373.1"/>
    </source>
</evidence>
<comment type="function">
    <text evidence="3">Together with AIPP3/BDT1, cooperates to form a BAH-PHD bivalent histone reader complex able to read histone H3 lysine 27 trimethylation (H3K27me3) histone marks in order to regulate transcription, especially to prevent early flowering; promotes AIPP3/BDT1 binding to H3K27me3.</text>
</comment>
<comment type="subunit">
    <text evidence="3">Interacts directly with AIPP3/BDT1.</text>
</comment>
<comment type="disruption phenotype">
    <text evidence="3">No obvious developmental defects (PubMed:33433058). Plants missing all PHD finger-containing proteins (e.g. PHD1, PAIPP2/PHD2, AIPP2/PHD3, PHD4, PHD5 and PHD6) exhibit an increased expression of flowering genes leading to an early flowering phenotype under long-day conditions as well as growth retardation (PubMed:33433058).</text>
</comment>
<comment type="sequence caution" evidence="5">
    <conflict type="erroneous termination">
        <sequence resource="EMBL-CDS" id="ABK28770"/>
    </conflict>
    <text>Extended C-terminus.</text>
</comment>
<keyword id="KW-0479">Metal-binding</keyword>
<keyword id="KW-1185">Reference proteome</keyword>
<keyword id="KW-0804">Transcription</keyword>
<keyword id="KW-0805">Transcription regulation</keyword>
<keyword id="KW-0862">Zinc</keyword>
<keyword id="KW-0863">Zinc-finger</keyword>
<organism>
    <name type="scientific">Arabidopsis thaliana</name>
    <name type="common">Mouse-ear cress</name>
    <dbReference type="NCBI Taxonomy" id="3702"/>
    <lineage>
        <taxon>Eukaryota</taxon>
        <taxon>Viridiplantae</taxon>
        <taxon>Streptophyta</taxon>
        <taxon>Embryophyta</taxon>
        <taxon>Tracheophyta</taxon>
        <taxon>Spermatophyta</taxon>
        <taxon>Magnoliopsida</taxon>
        <taxon>eudicotyledons</taxon>
        <taxon>Gunneridae</taxon>
        <taxon>Pentapetalae</taxon>
        <taxon>rosids</taxon>
        <taxon>malvids</taxon>
        <taxon>Brassicales</taxon>
        <taxon>Brassicaceae</taxon>
        <taxon>Camelineae</taxon>
        <taxon>Arabidopsis</taxon>
    </lineage>
</organism>
<accession>Q9FNQ4</accession>
<accession>A0MFQ9</accession>
<proteinExistence type="evidence at protein level"/>
<gene>
    <name evidence="4" type="primary">PHD4</name>
    <name evidence="6" type="ordered locus">At5g61110</name>
    <name evidence="7" type="ORF">MAF19.11</name>
</gene>
<protein>
    <recommendedName>
        <fullName evidence="4">PHD finger-containing protein 4</fullName>
    </recommendedName>
</protein>